<organism>
    <name type="scientific">Ipomoea purpurea</name>
    <name type="common">Common morning glory</name>
    <name type="synonym">Pharbitis purpurea</name>
    <dbReference type="NCBI Taxonomy" id="4121"/>
    <lineage>
        <taxon>Eukaryota</taxon>
        <taxon>Viridiplantae</taxon>
        <taxon>Streptophyta</taxon>
        <taxon>Embryophyta</taxon>
        <taxon>Tracheophyta</taxon>
        <taxon>Spermatophyta</taxon>
        <taxon>Magnoliopsida</taxon>
        <taxon>eudicotyledons</taxon>
        <taxon>Gunneridae</taxon>
        <taxon>Pentapetalae</taxon>
        <taxon>asterids</taxon>
        <taxon>lamiids</taxon>
        <taxon>Solanales</taxon>
        <taxon>Convolvulaceae</taxon>
        <taxon>Ipomoeeae</taxon>
        <taxon>Ipomoea</taxon>
    </lineage>
</organism>
<reference key="1">
    <citation type="journal article" date="2007" name="BMC Plant Biol.">
        <title>Complete plastid genome sequences suggest strong selection for retention of photosynthetic genes in the parasitic plant genus Cuscuta.</title>
        <authorList>
            <person name="McNeal J.R."/>
            <person name="Kuehl J.V."/>
            <person name="Boore J.L."/>
            <person name="dePamphilis C.W."/>
        </authorList>
    </citation>
    <scope>NUCLEOTIDE SEQUENCE [LARGE SCALE GENOMIC DNA]</scope>
</reference>
<sequence length="473" mass="51916">MKTLYSLRRFYHVETLFNGTLALAGRDQETTGFAWWAGNARLINLSGKLLGAHVAHAGLIVFWAGAMNLFEVAHFVPEKPMYEQGLILLPHLATLGWGVGPGGEVLDTFPYFVSGVLHLISSAVLGFGGIYHALLGPETLEESFPFFGYVWKDRNKMTTILGIHLILLGLGAFLLVFKALYFGGVYDTWAPGGGDVRKITNLTLSPSIIFGYLLKSPFGGEGWIVSVDDLEDIVGGHVWLGSICILGGIWHILTKPFAWARRAFVWSGEAYLSYSLGALAIFGFTACCFVWFNNTAYPSEFYGPTGPEASQAQAFTFLVRDQRLGANVGSAQGPTGLGKYLMRSPTGEVIFGGETMRFWDLRAPWLEPLRGPNGLDLSRLKKDIQPWQERRSAEYMTHAPLGSLNSVGGVATEINAVNYVSPRSWLATSHFVLGFFFFVGHLWHAGRARAAAAGFEKGIDRDFEPVLSMTPLN</sequence>
<protein>
    <recommendedName>
        <fullName evidence="1">Photosystem II CP43 reaction center protein</fullName>
    </recommendedName>
    <alternativeName>
        <fullName evidence="1">PSII 43 kDa protein</fullName>
    </alternativeName>
    <alternativeName>
        <fullName evidence="1">Protein CP-43</fullName>
    </alternativeName>
</protein>
<feature type="propeptide" id="PRO_0000431154" evidence="1">
    <location>
        <begin position="1"/>
        <end position="14"/>
    </location>
</feature>
<feature type="chain" id="PRO_0000361400" description="Photosystem II CP43 reaction center protein" evidence="1">
    <location>
        <begin position="15"/>
        <end position="473"/>
    </location>
</feature>
<feature type="transmembrane region" description="Helical" evidence="1">
    <location>
        <begin position="69"/>
        <end position="93"/>
    </location>
</feature>
<feature type="transmembrane region" description="Helical" evidence="1">
    <location>
        <begin position="134"/>
        <end position="155"/>
    </location>
</feature>
<feature type="transmembrane region" description="Helical" evidence="1">
    <location>
        <begin position="178"/>
        <end position="200"/>
    </location>
</feature>
<feature type="transmembrane region" description="Helical" evidence="1">
    <location>
        <begin position="255"/>
        <end position="275"/>
    </location>
</feature>
<feature type="transmembrane region" description="Helical" evidence="1">
    <location>
        <begin position="291"/>
        <end position="312"/>
    </location>
</feature>
<feature type="transmembrane region" description="Helical" evidence="1">
    <location>
        <begin position="447"/>
        <end position="471"/>
    </location>
</feature>
<feature type="binding site" evidence="1">
    <location>
        <position position="367"/>
    </location>
    <ligand>
        <name>[CaMn4O5] cluster</name>
        <dbReference type="ChEBI" id="CHEBI:189552"/>
    </ligand>
</feature>
<feature type="modified residue" description="N-acetylthreonine" evidence="1">
    <location>
        <position position="15"/>
    </location>
</feature>
<feature type="modified residue" description="Phosphothreonine" evidence="1">
    <location>
        <position position="15"/>
    </location>
</feature>
<proteinExistence type="inferred from homology"/>
<keyword id="KW-0007">Acetylation</keyword>
<keyword id="KW-0148">Chlorophyll</keyword>
<keyword id="KW-0150">Chloroplast</keyword>
<keyword id="KW-0157">Chromophore</keyword>
<keyword id="KW-0464">Manganese</keyword>
<keyword id="KW-0472">Membrane</keyword>
<keyword id="KW-0479">Metal-binding</keyword>
<keyword id="KW-0597">Phosphoprotein</keyword>
<keyword id="KW-0602">Photosynthesis</keyword>
<keyword id="KW-0604">Photosystem II</keyword>
<keyword id="KW-0934">Plastid</keyword>
<keyword id="KW-0793">Thylakoid</keyword>
<keyword id="KW-0812">Transmembrane</keyword>
<keyword id="KW-1133">Transmembrane helix</keyword>
<accession>A7Y3C5</accession>
<comment type="function">
    <text evidence="1">One of the components of the core complex of photosystem II (PSII). It binds chlorophyll and helps catalyze the primary light-induced photochemical processes of PSII. PSII is a light-driven water:plastoquinone oxidoreductase, using light energy to abstract electrons from H(2)O, generating O(2) and a proton gradient subsequently used for ATP formation.</text>
</comment>
<comment type="cofactor">
    <text evidence="1">Binds multiple chlorophylls and provides some of the ligands for the Ca-4Mn-5O cluster of the oxygen-evolving complex. It may also provide a ligand for a Cl- that is required for oxygen evolution. PSII binds additional chlorophylls, carotenoids and specific lipids.</text>
</comment>
<comment type="subunit">
    <text evidence="1">PSII is composed of 1 copy each of membrane proteins PsbA, PsbB, PsbC, PsbD, PsbE, PsbF, PsbH, PsbI, PsbJ, PsbK, PsbL, PsbM, PsbT, PsbX, PsbY, PsbZ, Psb30/Ycf12, at least 3 peripheral proteins of the oxygen-evolving complex and a large number of cofactors. It forms dimeric complexes.</text>
</comment>
<comment type="subcellular location">
    <subcellularLocation>
        <location evidence="1">Plastid</location>
        <location evidence="1">Chloroplast thylakoid membrane</location>
        <topology evidence="1">Multi-pass membrane protein</topology>
    </subcellularLocation>
</comment>
<comment type="similarity">
    <text evidence="1">Belongs to the PsbB/PsbC family. PsbC subfamily.</text>
</comment>
<name>PSBC_IPOPU</name>
<geneLocation type="chloroplast"/>
<gene>
    <name evidence="1" type="primary">psbC</name>
</gene>
<evidence type="ECO:0000255" key="1">
    <source>
        <dbReference type="HAMAP-Rule" id="MF_01496"/>
    </source>
</evidence>
<dbReference type="EMBL" id="EU118126">
    <property type="protein sequence ID" value="ABV02344.1"/>
    <property type="molecule type" value="Genomic_DNA"/>
</dbReference>
<dbReference type="RefSeq" id="YP_001468304.2">
    <property type="nucleotide sequence ID" value="NC_009808.1"/>
</dbReference>
<dbReference type="SMR" id="A7Y3C5"/>
<dbReference type="GeneID" id="5601334"/>
<dbReference type="GO" id="GO:0009535">
    <property type="term" value="C:chloroplast thylakoid membrane"/>
    <property type="evidence" value="ECO:0007669"/>
    <property type="project" value="UniProtKB-SubCell"/>
</dbReference>
<dbReference type="GO" id="GO:0009523">
    <property type="term" value="C:photosystem II"/>
    <property type="evidence" value="ECO:0007669"/>
    <property type="project" value="UniProtKB-KW"/>
</dbReference>
<dbReference type="GO" id="GO:0016168">
    <property type="term" value="F:chlorophyll binding"/>
    <property type="evidence" value="ECO:0007669"/>
    <property type="project" value="UniProtKB-UniRule"/>
</dbReference>
<dbReference type="GO" id="GO:0045156">
    <property type="term" value="F:electron transporter, transferring electrons within the cyclic electron transport pathway of photosynthesis activity"/>
    <property type="evidence" value="ECO:0007669"/>
    <property type="project" value="InterPro"/>
</dbReference>
<dbReference type="GO" id="GO:0046872">
    <property type="term" value="F:metal ion binding"/>
    <property type="evidence" value="ECO:0007669"/>
    <property type="project" value="UniProtKB-KW"/>
</dbReference>
<dbReference type="GO" id="GO:0009772">
    <property type="term" value="P:photosynthetic electron transport in photosystem II"/>
    <property type="evidence" value="ECO:0007669"/>
    <property type="project" value="InterPro"/>
</dbReference>
<dbReference type="FunFam" id="1.10.10.670:FF:000001">
    <property type="entry name" value="Photosystem II CP43 reaction center protein"/>
    <property type="match status" value="1"/>
</dbReference>
<dbReference type="Gene3D" id="1.10.10.670">
    <property type="entry name" value="photosystem ii from thermosynechococcus elongatus"/>
    <property type="match status" value="1"/>
</dbReference>
<dbReference type="HAMAP" id="MF_01496">
    <property type="entry name" value="PSII_PsbC_CP43"/>
    <property type="match status" value="1"/>
</dbReference>
<dbReference type="InterPro" id="IPR000932">
    <property type="entry name" value="PS_antenna-like"/>
</dbReference>
<dbReference type="InterPro" id="IPR036001">
    <property type="entry name" value="PS_II_antenna-like_sf"/>
</dbReference>
<dbReference type="InterPro" id="IPR005869">
    <property type="entry name" value="PSII_PsbC"/>
</dbReference>
<dbReference type="InterPro" id="IPR044900">
    <property type="entry name" value="PSII_PsbC_sf"/>
</dbReference>
<dbReference type="NCBIfam" id="TIGR01153">
    <property type="entry name" value="psbC"/>
    <property type="match status" value="1"/>
</dbReference>
<dbReference type="Pfam" id="PF00421">
    <property type="entry name" value="PSII"/>
    <property type="match status" value="1"/>
</dbReference>
<dbReference type="SUPFAM" id="SSF161077">
    <property type="entry name" value="Photosystem II antenna protein-like"/>
    <property type="match status" value="1"/>
</dbReference>